<evidence type="ECO:0000255" key="1">
    <source>
        <dbReference type="HAMAP-Rule" id="MF_01368"/>
    </source>
</evidence>
<evidence type="ECO:0000305" key="2"/>
<dbReference type="EMBL" id="BA000037">
    <property type="protein sequence ID" value="BAC93164.1"/>
    <property type="molecule type" value="Genomic_DNA"/>
</dbReference>
<dbReference type="RefSeq" id="WP_011078810.1">
    <property type="nucleotide sequence ID" value="NC_005139.1"/>
</dbReference>
<dbReference type="SMR" id="Q7MPG3"/>
<dbReference type="STRING" id="672.VV93_v1c03720"/>
<dbReference type="GeneID" id="93895040"/>
<dbReference type="KEGG" id="vvy:VV0400"/>
<dbReference type="eggNOG" id="COG0203">
    <property type="taxonomic scope" value="Bacteria"/>
</dbReference>
<dbReference type="HOGENOM" id="CLU_074407_2_0_6"/>
<dbReference type="Proteomes" id="UP000002675">
    <property type="component" value="Chromosome I"/>
</dbReference>
<dbReference type="GO" id="GO:0022625">
    <property type="term" value="C:cytosolic large ribosomal subunit"/>
    <property type="evidence" value="ECO:0007669"/>
    <property type="project" value="TreeGrafter"/>
</dbReference>
<dbReference type="GO" id="GO:0003735">
    <property type="term" value="F:structural constituent of ribosome"/>
    <property type="evidence" value="ECO:0007669"/>
    <property type="project" value="InterPro"/>
</dbReference>
<dbReference type="GO" id="GO:0006412">
    <property type="term" value="P:translation"/>
    <property type="evidence" value="ECO:0007669"/>
    <property type="project" value="UniProtKB-UniRule"/>
</dbReference>
<dbReference type="FunFam" id="3.90.1030.10:FF:000001">
    <property type="entry name" value="50S ribosomal protein L17"/>
    <property type="match status" value="1"/>
</dbReference>
<dbReference type="Gene3D" id="3.90.1030.10">
    <property type="entry name" value="Ribosomal protein L17"/>
    <property type="match status" value="1"/>
</dbReference>
<dbReference type="HAMAP" id="MF_01368">
    <property type="entry name" value="Ribosomal_bL17"/>
    <property type="match status" value="1"/>
</dbReference>
<dbReference type="InterPro" id="IPR000456">
    <property type="entry name" value="Ribosomal_bL17"/>
</dbReference>
<dbReference type="InterPro" id="IPR047859">
    <property type="entry name" value="Ribosomal_bL17_CS"/>
</dbReference>
<dbReference type="InterPro" id="IPR036373">
    <property type="entry name" value="Ribosomal_bL17_sf"/>
</dbReference>
<dbReference type="NCBIfam" id="TIGR00059">
    <property type="entry name" value="L17"/>
    <property type="match status" value="1"/>
</dbReference>
<dbReference type="PANTHER" id="PTHR14413:SF16">
    <property type="entry name" value="LARGE RIBOSOMAL SUBUNIT PROTEIN BL17M"/>
    <property type="match status" value="1"/>
</dbReference>
<dbReference type="PANTHER" id="PTHR14413">
    <property type="entry name" value="RIBOSOMAL PROTEIN L17"/>
    <property type="match status" value="1"/>
</dbReference>
<dbReference type="Pfam" id="PF01196">
    <property type="entry name" value="Ribosomal_L17"/>
    <property type="match status" value="1"/>
</dbReference>
<dbReference type="SUPFAM" id="SSF64263">
    <property type="entry name" value="Prokaryotic ribosomal protein L17"/>
    <property type="match status" value="1"/>
</dbReference>
<dbReference type="PROSITE" id="PS01167">
    <property type="entry name" value="RIBOSOMAL_L17"/>
    <property type="match status" value="1"/>
</dbReference>
<organism>
    <name type="scientific">Vibrio vulnificus (strain YJ016)</name>
    <dbReference type="NCBI Taxonomy" id="196600"/>
    <lineage>
        <taxon>Bacteria</taxon>
        <taxon>Pseudomonadati</taxon>
        <taxon>Pseudomonadota</taxon>
        <taxon>Gammaproteobacteria</taxon>
        <taxon>Vibrionales</taxon>
        <taxon>Vibrionaceae</taxon>
        <taxon>Vibrio</taxon>
    </lineage>
</organism>
<protein>
    <recommendedName>
        <fullName evidence="1">Large ribosomal subunit protein bL17</fullName>
    </recommendedName>
    <alternativeName>
        <fullName evidence="2">50S ribosomal protein L17</fullName>
    </alternativeName>
</protein>
<gene>
    <name evidence="1" type="primary">rplQ</name>
    <name type="ordered locus">VV0400</name>
</gene>
<proteinExistence type="inferred from homology"/>
<keyword id="KW-0687">Ribonucleoprotein</keyword>
<keyword id="KW-0689">Ribosomal protein</keyword>
<sequence>MRHRKSGRQLNRNSSHRKAMFSNMASSLVRHEVIKTTLPKAKELRRVVEPLITLAKTDSVANRRLAFARTRDNEVVAKLFNELGPRFAARQGGYTRILKAGFRAGDKAPMAYIELVDRPAAEEAAAE</sequence>
<accession>Q7MPG3</accession>
<reference key="1">
    <citation type="journal article" date="2003" name="Genome Res.">
        <title>Comparative genome analysis of Vibrio vulnificus, a marine pathogen.</title>
        <authorList>
            <person name="Chen C.-Y."/>
            <person name="Wu K.-M."/>
            <person name="Chang Y.-C."/>
            <person name="Chang C.-H."/>
            <person name="Tsai H.-C."/>
            <person name="Liao T.-L."/>
            <person name="Liu Y.-M."/>
            <person name="Chen H.-J."/>
            <person name="Shen A.B.-T."/>
            <person name="Li J.-C."/>
            <person name="Su T.-L."/>
            <person name="Shao C.-P."/>
            <person name="Lee C.-T."/>
            <person name="Hor L.-I."/>
            <person name="Tsai S.-F."/>
        </authorList>
    </citation>
    <scope>NUCLEOTIDE SEQUENCE [LARGE SCALE GENOMIC DNA]</scope>
    <source>
        <strain>YJ016</strain>
    </source>
</reference>
<feature type="chain" id="PRO_0000267967" description="Large ribosomal subunit protein bL17">
    <location>
        <begin position="1"/>
        <end position="127"/>
    </location>
</feature>
<name>RL17_VIBVY</name>
<comment type="subunit">
    <text evidence="1">Part of the 50S ribosomal subunit. Contacts protein L32.</text>
</comment>
<comment type="similarity">
    <text evidence="1">Belongs to the bacterial ribosomal protein bL17 family.</text>
</comment>